<organism>
    <name type="scientific">Rattus norvegicus</name>
    <name type="common">Rat</name>
    <dbReference type="NCBI Taxonomy" id="10116"/>
    <lineage>
        <taxon>Eukaryota</taxon>
        <taxon>Metazoa</taxon>
        <taxon>Chordata</taxon>
        <taxon>Craniata</taxon>
        <taxon>Vertebrata</taxon>
        <taxon>Euteleostomi</taxon>
        <taxon>Mammalia</taxon>
        <taxon>Eutheria</taxon>
        <taxon>Euarchontoglires</taxon>
        <taxon>Glires</taxon>
        <taxon>Rodentia</taxon>
        <taxon>Myomorpha</taxon>
        <taxon>Muroidea</taxon>
        <taxon>Muridae</taxon>
        <taxon>Murinae</taxon>
        <taxon>Rattus</taxon>
    </lineage>
</organism>
<gene>
    <name evidence="1" type="primary">Ptges3</name>
    <name evidence="1" type="synonym">Tebp</name>
</gene>
<protein>
    <recommendedName>
        <fullName>Prostaglandin E synthase 3</fullName>
        <ecNumber evidence="7">5.3.99.3</ecNumber>
    </recommendedName>
    <alternativeName>
        <fullName>Cytosolic prostaglandin E2 synthase</fullName>
        <shortName>cPGES</shortName>
    </alternativeName>
    <alternativeName>
        <fullName>Hsp90 co-chaperone</fullName>
    </alternativeName>
    <alternativeName>
        <fullName>Progesterone receptor complex p23</fullName>
    </alternativeName>
    <alternativeName>
        <fullName>Telomerase-binding protein p23</fullName>
    </alternativeName>
</protein>
<evidence type="ECO:0000250" key="1">
    <source>
        <dbReference type="UniProtKB" id="Q15185"/>
    </source>
</evidence>
<evidence type="ECO:0000250" key="2">
    <source>
        <dbReference type="UniProtKB" id="Q3ZBF7"/>
    </source>
</evidence>
<evidence type="ECO:0000250" key="3">
    <source>
        <dbReference type="UniProtKB" id="Q9R0Q7"/>
    </source>
</evidence>
<evidence type="ECO:0000255" key="4"/>
<evidence type="ECO:0000255" key="5">
    <source>
        <dbReference type="PROSITE-ProRule" id="PRU00547"/>
    </source>
</evidence>
<evidence type="ECO:0000256" key="6">
    <source>
        <dbReference type="SAM" id="MobiDB-lite"/>
    </source>
</evidence>
<evidence type="ECO:0000269" key="7">
    <source>
    </source>
</evidence>
<evidence type="ECO:0000305" key="8"/>
<evidence type="ECO:0007744" key="9">
    <source>
    </source>
</evidence>
<evidence type="ECO:0007744" key="10">
    <source>
    </source>
</evidence>
<dbReference type="EC" id="5.3.99.3" evidence="7"/>
<dbReference type="EMBL" id="CK475788">
    <property type="status" value="NOT_ANNOTATED_CDS"/>
    <property type="molecule type" value="mRNA"/>
</dbReference>
<dbReference type="RefSeq" id="NP_001124461.1">
    <property type="nucleotide sequence ID" value="NM_001130989.2"/>
</dbReference>
<dbReference type="BMRB" id="P83868"/>
<dbReference type="SMR" id="P83868"/>
<dbReference type="BioGRID" id="263737">
    <property type="interactions" value="1"/>
</dbReference>
<dbReference type="CORUM" id="P83868"/>
<dbReference type="FunCoup" id="P83868">
    <property type="interactions" value="3867"/>
</dbReference>
<dbReference type="STRING" id="10116.ENSRNOP00000003787"/>
<dbReference type="iPTMnet" id="P83868"/>
<dbReference type="PhosphoSitePlus" id="P83868"/>
<dbReference type="SwissPalm" id="P83868"/>
<dbReference type="jPOST" id="P83868"/>
<dbReference type="PaxDb" id="10116-ENSRNOP00000003787"/>
<dbReference type="GeneID" id="362809"/>
<dbReference type="KEGG" id="rno:362809"/>
<dbReference type="UCSC" id="RGD:1561913">
    <property type="organism name" value="rat"/>
</dbReference>
<dbReference type="AGR" id="RGD:1561913"/>
<dbReference type="CTD" id="10728"/>
<dbReference type="RGD" id="1561913">
    <property type="gene designation" value="Ptges3"/>
</dbReference>
<dbReference type="VEuPathDB" id="HostDB:ENSRNOG00000002642"/>
<dbReference type="eggNOG" id="KOG3158">
    <property type="taxonomic scope" value="Eukaryota"/>
</dbReference>
<dbReference type="HOGENOM" id="CLU_078883_1_2_1"/>
<dbReference type="InParanoid" id="P83868"/>
<dbReference type="OrthoDB" id="9277at9989"/>
<dbReference type="PhylomeDB" id="P83868"/>
<dbReference type="TreeFam" id="TF315077"/>
<dbReference type="Reactome" id="R-RNO-2162123">
    <property type="pathway name" value="Synthesis of Prostaglandins (PG) and Thromboxanes (TX)"/>
</dbReference>
<dbReference type="Reactome" id="R-RNO-3371497">
    <property type="pathway name" value="HSP90 chaperone cycle for steroid hormone receptors (SHR) in the presence of ligand"/>
</dbReference>
<dbReference type="Reactome" id="R-RNO-3371511">
    <property type="pathway name" value="HSF1 activation"/>
</dbReference>
<dbReference type="Reactome" id="R-RNO-3371568">
    <property type="pathway name" value="Attenuation phase"/>
</dbReference>
<dbReference type="Reactome" id="R-RNO-8937144">
    <property type="pathway name" value="Aryl hydrocarbon receptor signalling"/>
</dbReference>
<dbReference type="Reactome" id="R-RNO-8939211">
    <property type="pathway name" value="ESR-mediated signaling"/>
</dbReference>
<dbReference type="Reactome" id="R-RNO-9018519">
    <property type="pathway name" value="Estrogen-dependent gene expression"/>
</dbReference>
<dbReference type="SABIO-RK" id="P83868"/>
<dbReference type="UniPathway" id="UPA00662"/>
<dbReference type="ChiTaRS" id="Ptges3">
    <property type="organism name" value="rat"/>
</dbReference>
<dbReference type="PRO" id="PR:P83868"/>
<dbReference type="Proteomes" id="UP000002494">
    <property type="component" value="Chromosome 7"/>
</dbReference>
<dbReference type="Bgee" id="ENSRNOG00000002642">
    <property type="expression patterns" value="Expressed in thymus and 19 other cell types or tissues"/>
</dbReference>
<dbReference type="ExpressionAtlas" id="P83868">
    <property type="expression patterns" value="baseline and differential"/>
</dbReference>
<dbReference type="GO" id="GO:0005884">
    <property type="term" value="C:actin filament"/>
    <property type="evidence" value="ECO:0000314"/>
    <property type="project" value="RGD"/>
</dbReference>
<dbReference type="GO" id="GO:0005829">
    <property type="term" value="C:cytosol"/>
    <property type="evidence" value="ECO:0000318"/>
    <property type="project" value="GO_Central"/>
</dbReference>
<dbReference type="GO" id="GO:0043025">
    <property type="term" value="C:neuronal cell body"/>
    <property type="evidence" value="ECO:0000314"/>
    <property type="project" value="RGD"/>
</dbReference>
<dbReference type="GO" id="GO:0005634">
    <property type="term" value="C:nucleus"/>
    <property type="evidence" value="ECO:0000318"/>
    <property type="project" value="GO_Central"/>
</dbReference>
<dbReference type="GO" id="GO:0048471">
    <property type="term" value="C:perinuclear region of cytoplasm"/>
    <property type="evidence" value="ECO:0000314"/>
    <property type="project" value="RGD"/>
</dbReference>
<dbReference type="GO" id="GO:0101031">
    <property type="term" value="C:protein folding chaperone complex"/>
    <property type="evidence" value="ECO:0000266"/>
    <property type="project" value="RGD"/>
</dbReference>
<dbReference type="GO" id="GO:0032991">
    <property type="term" value="C:protein-containing complex"/>
    <property type="evidence" value="ECO:0000314"/>
    <property type="project" value="RGD"/>
</dbReference>
<dbReference type="GO" id="GO:0005697">
    <property type="term" value="C:telomerase holoenzyme complex"/>
    <property type="evidence" value="ECO:0000266"/>
    <property type="project" value="RGD"/>
</dbReference>
<dbReference type="GO" id="GO:0070182">
    <property type="term" value="F:DNA polymerase binding"/>
    <property type="evidence" value="ECO:0000266"/>
    <property type="project" value="RGD"/>
</dbReference>
<dbReference type="GO" id="GO:0019899">
    <property type="term" value="F:enzyme binding"/>
    <property type="evidence" value="ECO:0000353"/>
    <property type="project" value="RGD"/>
</dbReference>
<dbReference type="GO" id="GO:0051879">
    <property type="term" value="F:Hsp90 protein binding"/>
    <property type="evidence" value="ECO:0000314"/>
    <property type="project" value="RGD"/>
</dbReference>
<dbReference type="GO" id="GO:0002039">
    <property type="term" value="F:p53 binding"/>
    <property type="evidence" value="ECO:0000314"/>
    <property type="project" value="RGD"/>
</dbReference>
<dbReference type="GO" id="GO:0050220">
    <property type="term" value="F:prostaglandin-E synthase activity"/>
    <property type="evidence" value="ECO:0000314"/>
    <property type="project" value="RGD"/>
</dbReference>
<dbReference type="GO" id="GO:0051087">
    <property type="term" value="F:protein-folding chaperone binding"/>
    <property type="evidence" value="ECO:0000318"/>
    <property type="project" value="GO_Central"/>
</dbReference>
<dbReference type="GO" id="GO:0003720">
    <property type="term" value="F:telomerase activity"/>
    <property type="evidence" value="ECO:0000266"/>
    <property type="project" value="RGD"/>
</dbReference>
<dbReference type="GO" id="GO:0051082">
    <property type="term" value="F:unfolded protein binding"/>
    <property type="evidence" value="ECO:0000250"/>
    <property type="project" value="UniProtKB"/>
</dbReference>
<dbReference type="GO" id="GO:0051085">
    <property type="term" value="P:chaperone cofactor-dependent protein refolding"/>
    <property type="evidence" value="ECO:0000266"/>
    <property type="project" value="RGD"/>
</dbReference>
<dbReference type="GO" id="GO:0051131">
    <property type="term" value="P:chaperone-mediated protein complex assembly"/>
    <property type="evidence" value="ECO:0000266"/>
    <property type="project" value="RGD"/>
</dbReference>
<dbReference type="GO" id="GO:0048144">
    <property type="term" value="P:fibroblast proliferation"/>
    <property type="evidence" value="ECO:0000266"/>
    <property type="project" value="RGD"/>
</dbReference>
<dbReference type="GO" id="GO:0005978">
    <property type="term" value="P:glycogen biosynthetic process"/>
    <property type="evidence" value="ECO:0000266"/>
    <property type="project" value="RGD"/>
</dbReference>
<dbReference type="GO" id="GO:0060430">
    <property type="term" value="P:lung saccule development"/>
    <property type="evidence" value="ECO:0000266"/>
    <property type="project" value="RGD"/>
</dbReference>
<dbReference type="GO" id="GO:0051402">
    <property type="term" value="P:neuron apoptotic process"/>
    <property type="evidence" value="ECO:0000315"/>
    <property type="project" value="RGD"/>
</dbReference>
<dbReference type="GO" id="GO:0042921">
    <property type="term" value="P:nuclear receptor-mediated glucocorticoid signaling pathway"/>
    <property type="evidence" value="ECO:0000266"/>
    <property type="project" value="RGD"/>
</dbReference>
<dbReference type="GO" id="GO:0010628">
    <property type="term" value="P:positive regulation of gene expression"/>
    <property type="evidence" value="ECO:0000315"/>
    <property type="project" value="RGD"/>
</dbReference>
<dbReference type="GO" id="GO:0032212">
    <property type="term" value="P:positive regulation of telomere maintenance via telomerase"/>
    <property type="evidence" value="ECO:0000266"/>
    <property type="project" value="RGD"/>
</dbReference>
<dbReference type="GO" id="GO:0001516">
    <property type="term" value="P:prostaglandin biosynthetic process"/>
    <property type="evidence" value="ECO:0000314"/>
    <property type="project" value="RGD"/>
</dbReference>
<dbReference type="GO" id="GO:0006693">
    <property type="term" value="P:prostaglandin metabolic process"/>
    <property type="evidence" value="ECO:0000315"/>
    <property type="project" value="RGD"/>
</dbReference>
<dbReference type="GO" id="GO:0006457">
    <property type="term" value="P:protein folding"/>
    <property type="evidence" value="ECO:0000318"/>
    <property type="project" value="GO_Central"/>
</dbReference>
<dbReference type="GO" id="GO:0050821">
    <property type="term" value="P:protein stabilization"/>
    <property type="evidence" value="ECO:0000266"/>
    <property type="project" value="RGD"/>
</dbReference>
<dbReference type="GO" id="GO:0043588">
    <property type="term" value="P:skin development"/>
    <property type="evidence" value="ECO:0000266"/>
    <property type="project" value="RGD"/>
</dbReference>
<dbReference type="GO" id="GO:1905323">
    <property type="term" value="P:telomerase holoenzyme complex assembly"/>
    <property type="evidence" value="ECO:0000266"/>
    <property type="project" value="RGD"/>
</dbReference>
<dbReference type="GO" id="GO:0007004">
    <property type="term" value="P:telomere maintenance via telomerase"/>
    <property type="evidence" value="ECO:0000266"/>
    <property type="project" value="RGD"/>
</dbReference>
<dbReference type="CDD" id="cd00237">
    <property type="entry name" value="p23"/>
    <property type="match status" value="1"/>
</dbReference>
<dbReference type="FunFam" id="2.60.40.790:FF:000003">
    <property type="entry name" value="prostaglandin E synthase 3"/>
    <property type="match status" value="1"/>
</dbReference>
<dbReference type="Gene3D" id="2.60.40.790">
    <property type="match status" value="1"/>
</dbReference>
<dbReference type="InterPro" id="IPR007052">
    <property type="entry name" value="CS_dom"/>
</dbReference>
<dbReference type="InterPro" id="IPR008978">
    <property type="entry name" value="HSP20-like_chaperone"/>
</dbReference>
<dbReference type="InterPro" id="IPR045250">
    <property type="entry name" value="p23-like"/>
</dbReference>
<dbReference type="PANTHER" id="PTHR22932:SF3">
    <property type="entry name" value="PROSTAGLANDIN E SYNTHASE 3"/>
    <property type="match status" value="1"/>
</dbReference>
<dbReference type="PANTHER" id="PTHR22932">
    <property type="entry name" value="TELOMERASE-BINDING PROTEIN P23 HSP90 CO-CHAPERONE"/>
    <property type="match status" value="1"/>
</dbReference>
<dbReference type="Pfam" id="PF04969">
    <property type="entry name" value="CS"/>
    <property type="match status" value="1"/>
</dbReference>
<dbReference type="SUPFAM" id="SSF49764">
    <property type="entry name" value="HSP20-like chaperones"/>
    <property type="match status" value="1"/>
</dbReference>
<dbReference type="PROSITE" id="PS51203">
    <property type="entry name" value="CS"/>
    <property type="match status" value="1"/>
</dbReference>
<name>TEBP_RAT</name>
<reference key="1">
    <citation type="submission" date="2004-01" db="EMBL/GenBank/DDBJ databases">
        <authorList>
            <consortium name="The MGC Project Team"/>
        </authorList>
    </citation>
    <scope>NUCLEOTIDE SEQUENCE [LARGE SCALE MRNA]</scope>
</reference>
<reference key="2">
    <citation type="journal article" date="2000" name="J. Biol. Chem.">
        <title>Molecular identification of cytosolic prostaglandin E2 synthase that is functionally coupled with cyclooxygenase-1 in immediate prostaglandin E2 biosynthesis.</title>
        <authorList>
            <person name="Tanioka T."/>
            <person name="Nakatani Y."/>
            <person name="Semmyo N."/>
            <person name="Murakami M."/>
            <person name="Kudo I."/>
        </authorList>
    </citation>
    <scope>PROTEIN SEQUENCE OF 1-20; 33-42 AND 53-62</scope>
    <scope>CATALYTIC ACTIVITY</scope>
    <scope>TISSUE SPECIFICITY</scope>
    <scope>INDUCTION</scope>
    <scope>PATHWAY</scope>
    <source>
        <strain evidence="7">Wistar</strain>
        <tissue evidence="7">Brain</tissue>
    </source>
</reference>
<reference key="3">
    <citation type="journal article" date="2006" name="Proc. Natl. Acad. Sci. U.S.A.">
        <title>Quantitative phosphoproteomics of vasopressin-sensitive renal cells: regulation of aquaporin-2 phosphorylation at two sites.</title>
        <authorList>
            <person name="Hoffert J.D."/>
            <person name="Pisitkun T."/>
            <person name="Wang G."/>
            <person name="Shen R.-F."/>
            <person name="Knepper M.A."/>
        </authorList>
    </citation>
    <scope>PHOSPHORYLATION [LARGE SCALE ANALYSIS] AT SER-113</scope>
    <scope>IDENTIFICATION BY MASS SPECTROMETRY [LARGE SCALE ANALYSIS]</scope>
</reference>
<reference key="4">
    <citation type="journal article" date="2012" name="Nat. Commun.">
        <title>Quantitative maps of protein phosphorylation sites across 14 different rat organs and tissues.</title>
        <authorList>
            <person name="Lundby A."/>
            <person name="Secher A."/>
            <person name="Lage K."/>
            <person name="Nordsborg N.B."/>
            <person name="Dmytriyev A."/>
            <person name="Lundby C."/>
            <person name="Olsen J.V."/>
        </authorList>
    </citation>
    <scope>PHOSPHORYLATION [LARGE SCALE ANALYSIS] AT SER-113; SER-148 AND SER-151</scope>
    <scope>IDENTIFICATION BY MASS SPECTROMETRY [LARGE SCALE ANALYSIS]</scope>
</reference>
<comment type="function">
    <text evidence="1 7">Cytosolic prostaglandin synthase that catalyzes the oxidoreduction of prostaglandin endoperoxide H2 (PGH2) to prostaglandin E2 (PGE2) (PubMed:10922363). Molecular chaperone that localizes to genomic response elements in a hormone-dependent manner and disrupts receptor-mediated transcriptional activation, by promoting disassembly of transcriptional regulatory complexes. Facilitates HIF alpha proteins hydroxylation via interaction with EGLN1/PHD2, leading to recruit EGLN1/PHD2 to the HSP90 pathway (By similarity).</text>
</comment>
<comment type="catalytic activity">
    <reaction evidence="7">
        <text>prostaglandin H2 = prostaglandin E2</text>
        <dbReference type="Rhea" id="RHEA:12893"/>
        <dbReference type="ChEBI" id="CHEBI:57405"/>
        <dbReference type="ChEBI" id="CHEBI:606564"/>
        <dbReference type="EC" id="5.3.99.3"/>
    </reaction>
</comment>
<comment type="pathway">
    <text evidence="7">Lipid metabolism; prostaglandin biosynthesis.</text>
</comment>
<comment type="subunit">
    <text evidence="1">Probably forms a complex composed of chaperones HSP90 and HSP70, co-chaperones STIP1/HOP, CDC37, PPP5C, PTGES3/p23, TSC1 and client protein TSC2. Binds to the progesterone receptor. Interacts with TERT; the interaction, together with HSP90AA1, is required for correct assembly and stabilization of the telomerase holoenzyme complex. Interacts (via PXLE motif) with EGLN1/PHD2, recruiting EGLN1/PHD2 to the HSP90 pathway to facilitate HIF alpha proteins hydroxylation. Interacts with HSP90AA1, FLCN, FNIP1 and FNIP2.</text>
</comment>
<comment type="subcellular location">
    <subcellularLocation>
        <location evidence="2">Cytoplasm</location>
    </subcellularLocation>
</comment>
<comment type="tissue specificity">
    <text evidence="7">Widely expressed with highest levels in testis.</text>
</comment>
<comment type="induction">
    <text evidence="7">In brain, by LPS.</text>
</comment>
<comment type="PTM">
    <text evidence="1">Proteolytically cleaved by caspase-7 (CASP7) in response to apoptosis, leading to its inactivation.</text>
</comment>
<comment type="similarity">
    <text evidence="4">Belongs to the p23/wos2 family.</text>
</comment>
<comment type="sequence caution" evidence="8">
    <conflict type="frameshift">
        <sequence resource="EMBL" id="CK475788"/>
    </conflict>
</comment>
<accession>P83868</accession>
<keyword id="KW-0007">Acetylation</keyword>
<keyword id="KW-0963">Cytoplasm</keyword>
<keyword id="KW-0903">Direct protein sequencing</keyword>
<keyword id="KW-0275">Fatty acid biosynthesis</keyword>
<keyword id="KW-0276">Fatty acid metabolism</keyword>
<keyword id="KW-0413">Isomerase</keyword>
<keyword id="KW-1017">Isopeptide bond</keyword>
<keyword id="KW-0444">Lipid biosynthesis</keyword>
<keyword id="KW-0443">Lipid metabolism</keyword>
<keyword id="KW-0597">Phosphoprotein</keyword>
<keyword id="KW-0643">Prostaglandin biosynthesis</keyword>
<keyword id="KW-0644">Prostaglandin metabolism</keyword>
<keyword id="KW-1185">Reference proteome</keyword>
<keyword id="KW-0832">Ubl conjugation</keyword>
<proteinExistence type="evidence at protein level"/>
<feature type="chain" id="PRO_0000291382" description="Prostaglandin E synthase 3">
    <location>
        <begin position="1"/>
        <end position="160"/>
    </location>
</feature>
<feature type="domain" description="CS" evidence="5">
    <location>
        <begin position="1"/>
        <end position="90"/>
    </location>
</feature>
<feature type="region of interest" description="Disordered" evidence="6">
    <location>
        <begin position="118"/>
        <end position="160"/>
    </location>
</feature>
<feature type="short sequence motif" description="PXLE motif" evidence="1">
    <location>
        <begin position="157"/>
        <end position="160"/>
    </location>
</feature>
<feature type="compositionally biased region" description="Basic and acidic residues" evidence="6">
    <location>
        <begin position="122"/>
        <end position="132"/>
    </location>
</feature>
<feature type="compositionally biased region" description="Acidic residues" evidence="6">
    <location>
        <begin position="133"/>
        <end position="153"/>
    </location>
</feature>
<feature type="site" description="Cleavage; by caspase-7" evidence="1">
    <location>
        <begin position="142"/>
        <end position="143"/>
    </location>
</feature>
<feature type="modified residue" description="N6-acetyllysine" evidence="1">
    <location>
        <position position="33"/>
    </location>
</feature>
<feature type="modified residue" description="Phosphoserine" evidence="1">
    <location>
        <position position="44"/>
    </location>
</feature>
<feature type="modified residue" description="Phosphoserine" evidence="1">
    <location>
        <position position="85"/>
    </location>
</feature>
<feature type="modified residue" description="Phosphoserine" evidence="3">
    <location>
        <position position="100"/>
    </location>
</feature>
<feature type="modified residue" description="Phosphoserine" evidence="9 10">
    <location>
        <position position="113"/>
    </location>
</feature>
<feature type="modified residue" description="Phosphoserine" evidence="1">
    <location>
        <position position="118"/>
    </location>
</feature>
<feature type="modified residue" description="Phosphoserine" evidence="10">
    <location>
        <position position="148"/>
    </location>
</feature>
<feature type="modified residue" description="Phosphoserine" evidence="10">
    <location>
        <position position="151"/>
    </location>
</feature>
<feature type="cross-link" description="Glycyl lysine isopeptide (Lys-Gly) (interchain with G-Cter in SUMO2)" evidence="1">
    <location>
        <position position="35"/>
    </location>
</feature>
<feature type="cross-link" description="Glycyl lysine isopeptide (Lys-Gly) (interchain with G-Cter in SUMO2)" evidence="1">
    <location>
        <position position="65"/>
    </location>
</feature>
<feature type="sequence conflict" description="In Ref. 2; AA sequence." evidence="8" ref="2">
    <original>Q</original>
    <variation>D</variation>
    <location>
        <position position="2"/>
    </location>
</feature>
<feature type="sequence conflict" description="In Ref. 2; AA sequence." evidence="8" ref="2">
    <original>T</original>
    <variation>C</variation>
    <location>
        <position position="37"/>
    </location>
</feature>
<sequence length="160" mass="18721">MQPASAKWYDRRDYVFIEFCVEDSKDVNVNFEKSKLTFSCLGGSDNFKHLNEIDLFHCIDPNDSKHKRTDRSILCCLRKGESGQSWPRLTKERAKLNWLSVDFNNWKDWEDDSDEDMSNFDRFSEMMDHMGGDEDVDLPEVDGADDDSQDSDDEKMPDLE</sequence>